<feature type="chain" id="PRO_0000332712" description="Proline-rich protein 5">
    <location>
        <begin position="1"/>
        <end position="400"/>
    </location>
</feature>
<feature type="region of interest" description="Disordered" evidence="2">
    <location>
        <begin position="301"/>
        <end position="358"/>
    </location>
</feature>
<feature type="compositionally biased region" description="Polar residues" evidence="2">
    <location>
        <begin position="334"/>
        <end position="347"/>
    </location>
</feature>
<feature type="compositionally biased region" description="Low complexity" evidence="2">
    <location>
        <begin position="348"/>
        <end position="358"/>
    </location>
</feature>
<accession>Q8AVJ1</accession>
<organism>
    <name type="scientific">Xenopus laevis</name>
    <name type="common">African clawed frog</name>
    <dbReference type="NCBI Taxonomy" id="8355"/>
    <lineage>
        <taxon>Eukaryota</taxon>
        <taxon>Metazoa</taxon>
        <taxon>Chordata</taxon>
        <taxon>Craniata</taxon>
        <taxon>Vertebrata</taxon>
        <taxon>Euteleostomi</taxon>
        <taxon>Amphibia</taxon>
        <taxon>Batrachia</taxon>
        <taxon>Anura</taxon>
        <taxon>Pipoidea</taxon>
        <taxon>Pipidae</taxon>
        <taxon>Xenopodinae</taxon>
        <taxon>Xenopus</taxon>
        <taxon>Xenopus</taxon>
    </lineage>
</organism>
<reference key="1">
    <citation type="submission" date="2003-01" db="EMBL/GenBank/DDBJ databases">
        <authorList>
            <person name="Klein S."/>
            <person name="Strausberg R."/>
        </authorList>
    </citation>
    <scope>NUCLEOTIDE SEQUENCE [LARGE SCALE MRNA]</scope>
    <source>
        <tissue>Embryo</tissue>
    </source>
</reference>
<comment type="function">
    <text evidence="1">Associated subunit of mTORC2, which regulates cell growth and survival in response to hormonal signals.</text>
</comment>
<comment type="subunit">
    <text evidence="1">Associated component of the mechanistic target of rapamycin complex 2 (mTORC2).</text>
</comment>
<comment type="similarity">
    <text evidence="3">Belongs to the PROTOR family.</text>
</comment>
<protein>
    <recommendedName>
        <fullName>Proline-rich protein 5</fullName>
    </recommendedName>
    <alternativeName>
        <fullName>Protein observed with Rictor-1</fullName>
        <shortName>Protor-1</shortName>
    </alternativeName>
</protein>
<evidence type="ECO:0000250" key="1">
    <source>
        <dbReference type="UniProtKB" id="P85299"/>
    </source>
</evidence>
<evidence type="ECO:0000256" key="2">
    <source>
        <dbReference type="SAM" id="MobiDB-lite"/>
    </source>
</evidence>
<evidence type="ECO:0000305" key="3"/>
<sequence>MRSKFMSSPTLSDLGKREATAAAALDERGTQQKRAGANATWNSIQNGVISVFQKKGLADHELYSLNEGVRQLLKTELGSFFTEYLQNQLLTKGMVILRDKIRFYEGQKLLDSLAETWDFFFSDILPMLQAIFYPVQGKEPSIRQLALLHFRNIITLNLKLDDALSRPRARVPPSIIQMLLILQGVHESKGVTEEYMNLESLIQKVVSPYLGTYGLYSNEAPFCHSSCILEKRMFRRCPKSGEILTKNPVVRSKSYNNPLLTPVAEYEMENLVANGSGIRRHSVSEMTSVLELPMGYSNLTTDSTSKLSMAGTKPPGEGERPPISNGQFPPLHNLSDSQQGLYNSQRDSPLLPAPSSSPETIVDQILESIDSDSEGIFIDFGRGCSKSPEFSMEIGRQSLV</sequence>
<name>PRR5_XENLA</name>
<keyword id="KW-1185">Reference proteome</keyword>
<dbReference type="EMBL" id="BC042252">
    <property type="protein sequence ID" value="AAH42252.1"/>
    <property type="molecule type" value="mRNA"/>
</dbReference>
<dbReference type="RefSeq" id="NP_001080344.1">
    <property type="nucleotide sequence ID" value="NM_001086875.1"/>
</dbReference>
<dbReference type="SMR" id="Q8AVJ1"/>
<dbReference type="DNASU" id="380036"/>
<dbReference type="GeneID" id="380036"/>
<dbReference type="KEGG" id="xla:380036"/>
<dbReference type="AGR" id="Xenbase:XB-GENE-5918844"/>
<dbReference type="CTD" id="380036"/>
<dbReference type="Xenbase" id="XB-GENE-5918844">
    <property type="gene designation" value="prr5.L"/>
</dbReference>
<dbReference type="OrthoDB" id="2290221at2759"/>
<dbReference type="Proteomes" id="UP000186698">
    <property type="component" value="Chromosome 3L"/>
</dbReference>
<dbReference type="Bgee" id="380036">
    <property type="expression patterns" value="Expressed in kidney and 19 other cell types or tissues"/>
</dbReference>
<dbReference type="GO" id="GO:0031932">
    <property type="term" value="C:TORC2 complex"/>
    <property type="evidence" value="ECO:0000318"/>
    <property type="project" value="GO_Central"/>
</dbReference>
<dbReference type="GO" id="GO:0038203">
    <property type="term" value="P:TORC2 signaling"/>
    <property type="evidence" value="ECO:0000318"/>
    <property type="project" value="GO_Central"/>
</dbReference>
<dbReference type="InterPro" id="IPR013745">
    <property type="entry name" value="Bit61/PRR5"/>
</dbReference>
<dbReference type="InterPro" id="IPR016159">
    <property type="entry name" value="Cullin_repeat-like_dom_sf"/>
</dbReference>
<dbReference type="PANTHER" id="PTHR32428:SF4">
    <property type="entry name" value="PROLINE-RICH PROTEIN 5"/>
    <property type="match status" value="1"/>
</dbReference>
<dbReference type="PANTHER" id="PTHR32428">
    <property type="entry name" value="TARGET OF RAPAMYCIN COMPLEX 2 SUBUNIT BIT61-RELATED"/>
    <property type="match status" value="1"/>
</dbReference>
<dbReference type="Pfam" id="PF08539">
    <property type="entry name" value="HbrB"/>
    <property type="match status" value="1"/>
</dbReference>
<dbReference type="SUPFAM" id="SSF74788">
    <property type="entry name" value="Cullin repeat-like"/>
    <property type="match status" value="1"/>
</dbReference>
<gene>
    <name type="primary">prr5</name>
    <name type="synonym">protor1</name>
</gene>
<proteinExistence type="evidence at transcript level"/>